<proteinExistence type="evidence at protein level"/>
<protein>
    <recommendedName>
        <fullName evidence="7">Lysosomal membrane ascorbate-dependent ferrireductase CYB561A3</fullName>
        <ecNumber evidence="2">7.2.1.3</ecNumber>
    </recommendedName>
    <alternativeName>
        <fullName evidence="8">Cytochrome b ascorbate-dependent protein 3</fullName>
    </alternativeName>
    <alternativeName>
        <fullName evidence="8">Cytochrome b561 family member A3</fullName>
    </alternativeName>
    <alternativeName>
        <fullName evidence="2">Lysosomal cytochrome b</fullName>
        <shortName evidence="2">LCytb</shortName>
    </alternativeName>
</protein>
<evidence type="ECO:0000250" key="1">
    <source>
        <dbReference type="UniProtKB" id="Q53TN4"/>
    </source>
</evidence>
<evidence type="ECO:0000250" key="2">
    <source>
        <dbReference type="UniProtKB" id="Q6P1H1"/>
    </source>
</evidence>
<evidence type="ECO:0000255" key="3"/>
<evidence type="ECO:0000255" key="4">
    <source>
        <dbReference type="PROSITE-ProRule" id="PRU00242"/>
    </source>
</evidence>
<evidence type="ECO:0000269" key="5">
    <source>
    </source>
</evidence>
<evidence type="ECO:0000303" key="6">
    <source>
    </source>
</evidence>
<evidence type="ECO:0000305" key="7"/>
<evidence type="ECO:0000312" key="8">
    <source>
        <dbReference type="HGNC" id="HGNC:23014"/>
    </source>
</evidence>
<reference key="1">
    <citation type="journal article" date="2004" name="Nat. Genet.">
        <title>Complete sequencing and characterization of 21,243 full-length human cDNAs.</title>
        <authorList>
            <person name="Ota T."/>
            <person name="Suzuki Y."/>
            <person name="Nishikawa T."/>
            <person name="Otsuki T."/>
            <person name="Sugiyama T."/>
            <person name="Irie R."/>
            <person name="Wakamatsu A."/>
            <person name="Hayashi K."/>
            <person name="Sato H."/>
            <person name="Nagai K."/>
            <person name="Kimura K."/>
            <person name="Makita H."/>
            <person name="Sekine M."/>
            <person name="Obayashi M."/>
            <person name="Nishi T."/>
            <person name="Shibahara T."/>
            <person name="Tanaka T."/>
            <person name="Ishii S."/>
            <person name="Yamamoto J."/>
            <person name="Saito K."/>
            <person name="Kawai Y."/>
            <person name="Isono Y."/>
            <person name="Nakamura Y."/>
            <person name="Nagahari K."/>
            <person name="Murakami K."/>
            <person name="Yasuda T."/>
            <person name="Iwayanagi T."/>
            <person name="Wagatsuma M."/>
            <person name="Shiratori A."/>
            <person name="Sudo H."/>
            <person name="Hosoiri T."/>
            <person name="Kaku Y."/>
            <person name="Kodaira H."/>
            <person name="Kondo H."/>
            <person name="Sugawara M."/>
            <person name="Takahashi M."/>
            <person name="Kanda K."/>
            <person name="Yokoi T."/>
            <person name="Furuya T."/>
            <person name="Kikkawa E."/>
            <person name="Omura Y."/>
            <person name="Abe K."/>
            <person name="Kamihara K."/>
            <person name="Katsuta N."/>
            <person name="Sato K."/>
            <person name="Tanikawa M."/>
            <person name="Yamazaki M."/>
            <person name="Ninomiya K."/>
            <person name="Ishibashi T."/>
            <person name="Yamashita H."/>
            <person name="Murakawa K."/>
            <person name="Fujimori K."/>
            <person name="Tanai H."/>
            <person name="Kimata M."/>
            <person name="Watanabe M."/>
            <person name="Hiraoka S."/>
            <person name="Chiba Y."/>
            <person name="Ishida S."/>
            <person name="Ono Y."/>
            <person name="Takiguchi S."/>
            <person name="Watanabe S."/>
            <person name="Yosida M."/>
            <person name="Hotuta T."/>
            <person name="Kusano J."/>
            <person name="Kanehori K."/>
            <person name="Takahashi-Fujii A."/>
            <person name="Hara H."/>
            <person name="Tanase T.-O."/>
            <person name="Nomura Y."/>
            <person name="Togiya S."/>
            <person name="Komai F."/>
            <person name="Hara R."/>
            <person name="Takeuchi K."/>
            <person name="Arita M."/>
            <person name="Imose N."/>
            <person name="Musashino K."/>
            <person name="Yuuki H."/>
            <person name="Oshima A."/>
            <person name="Sasaki N."/>
            <person name="Aotsuka S."/>
            <person name="Yoshikawa Y."/>
            <person name="Matsunawa H."/>
            <person name="Ichihara T."/>
            <person name="Shiohata N."/>
            <person name="Sano S."/>
            <person name="Moriya S."/>
            <person name="Momiyama H."/>
            <person name="Satoh N."/>
            <person name="Takami S."/>
            <person name="Terashima Y."/>
            <person name="Suzuki O."/>
            <person name="Nakagawa S."/>
            <person name="Senoh A."/>
            <person name="Mizoguchi H."/>
            <person name="Goto Y."/>
            <person name="Shimizu F."/>
            <person name="Wakebe H."/>
            <person name="Hishigaki H."/>
            <person name="Watanabe T."/>
            <person name="Sugiyama A."/>
            <person name="Takemoto M."/>
            <person name="Kawakami B."/>
            <person name="Yamazaki M."/>
            <person name="Watanabe K."/>
            <person name="Kumagai A."/>
            <person name="Itakura S."/>
            <person name="Fukuzumi Y."/>
            <person name="Fujimori Y."/>
            <person name="Komiyama M."/>
            <person name="Tashiro H."/>
            <person name="Tanigami A."/>
            <person name="Fujiwara T."/>
            <person name="Ono T."/>
            <person name="Yamada K."/>
            <person name="Fujii Y."/>
            <person name="Ozaki K."/>
            <person name="Hirao M."/>
            <person name="Ohmori Y."/>
            <person name="Kawabata A."/>
            <person name="Hikiji T."/>
            <person name="Kobatake N."/>
            <person name="Inagaki H."/>
            <person name="Ikema Y."/>
            <person name="Okamoto S."/>
            <person name="Okitani R."/>
            <person name="Kawakami T."/>
            <person name="Noguchi S."/>
            <person name="Itoh T."/>
            <person name="Shigeta K."/>
            <person name="Senba T."/>
            <person name="Matsumura K."/>
            <person name="Nakajima Y."/>
            <person name="Mizuno T."/>
            <person name="Morinaga M."/>
            <person name="Sasaki M."/>
            <person name="Togashi T."/>
            <person name="Oyama M."/>
            <person name="Hata H."/>
            <person name="Watanabe M."/>
            <person name="Komatsu T."/>
            <person name="Mizushima-Sugano J."/>
            <person name="Satoh T."/>
            <person name="Shirai Y."/>
            <person name="Takahashi Y."/>
            <person name="Nakagawa K."/>
            <person name="Okumura K."/>
            <person name="Nagase T."/>
            <person name="Nomura N."/>
            <person name="Kikuchi H."/>
            <person name="Masuho Y."/>
            <person name="Yamashita R."/>
            <person name="Nakai K."/>
            <person name="Yada T."/>
            <person name="Nakamura Y."/>
            <person name="Ohara O."/>
            <person name="Isogai T."/>
            <person name="Sugano S."/>
        </authorList>
    </citation>
    <scope>NUCLEOTIDE SEQUENCE [LARGE SCALE MRNA] (ISOFORMS 1 AND 2)</scope>
    <source>
        <tissue>Blood</tissue>
        <tissue>Placenta</tissue>
    </source>
</reference>
<reference key="2">
    <citation type="journal article" date="2005" name="DNA Res.">
        <title>Signal sequence and keyword trap in silico for selection of full-length human cDNAs encoding secretion or membrane proteins from oligo-capped cDNA libraries.</title>
        <authorList>
            <person name="Otsuki T."/>
            <person name="Ota T."/>
            <person name="Nishikawa T."/>
            <person name="Hayashi K."/>
            <person name="Suzuki Y."/>
            <person name="Yamamoto J."/>
            <person name="Wakamatsu A."/>
            <person name="Kimura K."/>
            <person name="Sakamoto K."/>
            <person name="Hatano N."/>
            <person name="Kawai Y."/>
            <person name="Ishii S."/>
            <person name="Saito K."/>
            <person name="Kojima S."/>
            <person name="Sugiyama T."/>
            <person name="Ono T."/>
            <person name="Okano K."/>
            <person name="Yoshikawa Y."/>
            <person name="Aotsuka S."/>
            <person name="Sasaki N."/>
            <person name="Hattori A."/>
            <person name="Okumura K."/>
            <person name="Nagai K."/>
            <person name="Sugano S."/>
            <person name="Isogai T."/>
        </authorList>
    </citation>
    <scope>NUCLEOTIDE SEQUENCE [LARGE SCALE MRNA] (ISOFORM 1)</scope>
</reference>
<reference key="3">
    <citation type="journal article" date="2006" name="Nature">
        <title>Human chromosome 11 DNA sequence and analysis including novel gene identification.</title>
        <authorList>
            <person name="Taylor T.D."/>
            <person name="Noguchi H."/>
            <person name="Totoki Y."/>
            <person name="Toyoda A."/>
            <person name="Kuroki Y."/>
            <person name="Dewar K."/>
            <person name="Lloyd C."/>
            <person name="Itoh T."/>
            <person name="Takeda T."/>
            <person name="Kim D.-W."/>
            <person name="She X."/>
            <person name="Barlow K.F."/>
            <person name="Bloom T."/>
            <person name="Bruford E."/>
            <person name="Chang J.L."/>
            <person name="Cuomo C.A."/>
            <person name="Eichler E."/>
            <person name="FitzGerald M.G."/>
            <person name="Jaffe D.B."/>
            <person name="LaButti K."/>
            <person name="Nicol R."/>
            <person name="Park H.-S."/>
            <person name="Seaman C."/>
            <person name="Sougnez C."/>
            <person name="Yang X."/>
            <person name="Zimmer A.R."/>
            <person name="Zody M.C."/>
            <person name="Birren B.W."/>
            <person name="Nusbaum C."/>
            <person name="Fujiyama A."/>
            <person name="Hattori M."/>
            <person name="Rogers J."/>
            <person name="Lander E.S."/>
            <person name="Sakaki Y."/>
        </authorList>
    </citation>
    <scope>NUCLEOTIDE SEQUENCE [LARGE SCALE GENOMIC DNA]</scope>
</reference>
<reference key="4">
    <citation type="submission" date="2005-07" db="EMBL/GenBank/DDBJ databases">
        <authorList>
            <person name="Mural R.J."/>
            <person name="Istrail S."/>
            <person name="Sutton G.G."/>
            <person name="Florea L."/>
            <person name="Halpern A.L."/>
            <person name="Mobarry C.M."/>
            <person name="Lippert R."/>
            <person name="Walenz B."/>
            <person name="Shatkay H."/>
            <person name="Dew I."/>
            <person name="Miller J.R."/>
            <person name="Flanigan M.J."/>
            <person name="Edwards N.J."/>
            <person name="Bolanos R."/>
            <person name="Fasulo D."/>
            <person name="Halldorsson B.V."/>
            <person name="Hannenhalli S."/>
            <person name="Turner R."/>
            <person name="Yooseph S."/>
            <person name="Lu F."/>
            <person name="Nusskern D.R."/>
            <person name="Shue B.C."/>
            <person name="Zheng X.H."/>
            <person name="Zhong F."/>
            <person name="Delcher A.L."/>
            <person name="Huson D.H."/>
            <person name="Kravitz S.A."/>
            <person name="Mouchard L."/>
            <person name="Reinert K."/>
            <person name="Remington K.A."/>
            <person name="Clark A.G."/>
            <person name="Waterman M.S."/>
            <person name="Eichler E.E."/>
            <person name="Adams M.D."/>
            <person name="Hunkapiller M.W."/>
            <person name="Myers E.W."/>
            <person name="Venter J.C."/>
        </authorList>
    </citation>
    <scope>NUCLEOTIDE SEQUENCE [LARGE SCALE GENOMIC DNA]</scope>
</reference>
<reference key="5">
    <citation type="journal article" date="2004" name="Genome Res.">
        <title>The status, quality, and expansion of the NIH full-length cDNA project: the Mammalian Gene Collection (MGC).</title>
        <authorList>
            <consortium name="The MGC Project Team"/>
        </authorList>
    </citation>
    <scope>NUCLEOTIDE SEQUENCE [LARGE SCALE MRNA] (ISOFORM 1)</scope>
    <source>
        <tissue>Brain</tissue>
        <tissue>Lymph</tissue>
        <tissue>Pancreas</tissue>
    </source>
</reference>
<reference key="6">
    <citation type="journal article" date="2007" name="Traffic">
        <title>Integral and associated lysosomal membrane proteins.</title>
        <authorList>
            <person name="Schroeder B."/>
            <person name="Wrocklage C."/>
            <person name="Pan C."/>
            <person name="Jaeger R."/>
            <person name="Koesters B."/>
            <person name="Schaefer H."/>
            <person name="Elsaesser H.-P."/>
            <person name="Mann M."/>
            <person name="Hasilik A."/>
        </authorList>
    </citation>
    <scope>SUBCELLULAR LOCATION [LARGE SCALE ANALYSIS]</scope>
    <source>
        <tissue>Placenta</tissue>
    </source>
</reference>
<keyword id="KW-0025">Alternative splicing</keyword>
<keyword id="KW-0249">Electron transport</keyword>
<keyword id="KW-0967">Endosome</keyword>
<keyword id="KW-0325">Glycoprotein</keyword>
<keyword id="KW-0349">Heme</keyword>
<keyword id="KW-0408">Iron</keyword>
<keyword id="KW-0458">Lysosome</keyword>
<keyword id="KW-0472">Membrane</keyword>
<keyword id="KW-0479">Metal-binding</keyword>
<keyword id="KW-0560">Oxidoreductase</keyword>
<keyword id="KW-1267">Proteomics identification</keyword>
<keyword id="KW-1185">Reference proteome</keyword>
<keyword id="KW-1278">Translocase</keyword>
<keyword id="KW-0812">Transmembrane</keyword>
<keyword id="KW-1133">Transmembrane helix</keyword>
<keyword id="KW-0813">Transport</keyword>
<accession>Q8NBI2</accession>
<accession>B3KPU2</accession>
<accession>B4DLN9</accession>
<accession>J3KQH4</accession>
<accession>Q6PK96</accession>
<gene>
    <name evidence="8" type="primary">CYB561A3</name>
    <name evidence="8" type="synonym">CYBASC3</name>
    <name type="ORF">PSEC0259</name>
</gene>
<feature type="chain" id="PRO_0000314838" description="Lysosomal membrane ascorbate-dependent ferrireductase CYB561A3">
    <location>
        <begin position="1"/>
        <end position="242"/>
    </location>
</feature>
<feature type="topological domain" description="Cytoplasmic" evidence="1">
    <location>
        <begin position="1"/>
        <end position="7"/>
    </location>
</feature>
<feature type="transmembrane region" description="Helical" evidence="3">
    <location>
        <begin position="8"/>
        <end position="28"/>
    </location>
</feature>
<feature type="topological domain" description="Lumenal" evidence="1">
    <location>
        <begin position="29"/>
        <end position="45"/>
    </location>
</feature>
<feature type="transmembrane region" description="Helical" evidence="3">
    <location>
        <begin position="46"/>
        <end position="66"/>
    </location>
</feature>
<feature type="topological domain" description="Cytoplasmic" evidence="1">
    <location>
        <begin position="67"/>
        <end position="83"/>
    </location>
</feature>
<feature type="transmembrane region" description="Helical" evidence="3">
    <location>
        <begin position="84"/>
        <end position="104"/>
    </location>
</feature>
<feature type="topological domain" description="Lumenal" evidence="1">
    <location>
        <begin position="105"/>
        <end position="119"/>
    </location>
</feature>
<feature type="transmembrane region" description="Helical" evidence="3">
    <location>
        <begin position="120"/>
        <end position="140"/>
    </location>
</feature>
<feature type="topological domain" description="Cytoplasmic" evidence="1">
    <location>
        <begin position="141"/>
        <end position="154"/>
    </location>
</feature>
<feature type="transmembrane region" description="Helical" evidence="3">
    <location>
        <begin position="155"/>
        <end position="175"/>
    </location>
</feature>
<feature type="topological domain" description="Lumenal" evidence="1">
    <location>
        <begin position="176"/>
        <end position="202"/>
    </location>
</feature>
<feature type="transmembrane region" description="Helical" evidence="3">
    <location>
        <begin position="203"/>
        <end position="223"/>
    </location>
</feature>
<feature type="topological domain" description="Cytoplasmic" evidence="1">
    <location>
        <begin position="224"/>
        <end position="242"/>
    </location>
</feature>
<feature type="domain" description="Cytochrome b561" evidence="4">
    <location>
        <begin position="12"/>
        <end position="219"/>
    </location>
</feature>
<feature type="binding site" description="axial binding residue" evidence="1">
    <location>
        <position position="47"/>
    </location>
    <ligand>
        <name>heme b</name>
        <dbReference type="ChEBI" id="CHEBI:60344"/>
        <label>1</label>
    </ligand>
    <ligandPart>
        <name>Fe</name>
        <dbReference type="ChEBI" id="CHEBI:18248"/>
    </ligandPart>
</feature>
<feature type="binding site" evidence="1">
    <location>
        <position position="67"/>
    </location>
    <ligand>
        <name>heme b</name>
        <dbReference type="ChEBI" id="CHEBI:60344"/>
        <label>2</label>
    </ligand>
</feature>
<feature type="binding site" evidence="1">
    <location>
        <position position="76"/>
    </location>
    <ligand>
        <name>L-ascorbate</name>
        <dbReference type="ChEBI" id="CHEBI:38290"/>
    </ligand>
</feature>
<feature type="binding site" evidence="1">
    <location>
        <position position="80"/>
    </location>
    <ligand>
        <name>L-ascorbate</name>
        <dbReference type="ChEBI" id="CHEBI:38290"/>
    </ligand>
</feature>
<feature type="binding site" description="axial binding residue" evidence="1">
    <location>
        <position position="83"/>
    </location>
    <ligand>
        <name>heme b</name>
        <dbReference type="ChEBI" id="CHEBI:60344"/>
        <label>2</label>
    </ligand>
    <ligandPart>
        <name>Fe</name>
        <dbReference type="ChEBI" id="CHEBI:18248"/>
    </ligandPart>
</feature>
<feature type="binding site" evidence="1">
    <location>
        <begin position="112"/>
        <end position="115"/>
    </location>
    <ligand>
        <name>heme b</name>
        <dbReference type="ChEBI" id="CHEBI:60344"/>
        <label>1</label>
    </ligand>
</feature>
<feature type="binding site" description="axial binding residue" evidence="1">
    <location>
        <position position="117"/>
    </location>
    <ligand>
        <name>heme b</name>
        <dbReference type="ChEBI" id="CHEBI:60344"/>
        <label>1</label>
    </ligand>
    <ligandPart>
        <name>Fe</name>
        <dbReference type="ChEBI" id="CHEBI:18248"/>
    </ligandPart>
</feature>
<feature type="binding site" evidence="1">
    <location>
        <position position="149"/>
    </location>
    <ligand>
        <name>L-ascorbate</name>
        <dbReference type="ChEBI" id="CHEBI:38290"/>
    </ligand>
</feature>
<feature type="binding site" description="axial binding residue" evidence="1">
    <location>
        <position position="156"/>
    </location>
    <ligand>
        <name>heme b</name>
        <dbReference type="ChEBI" id="CHEBI:60344"/>
        <label>2</label>
    </ligand>
    <ligandPart>
        <name>Fe</name>
        <dbReference type="ChEBI" id="CHEBI:18248"/>
    </ligandPart>
</feature>
<feature type="binding site" evidence="1">
    <location>
        <position position="177"/>
    </location>
    <ligand>
        <name>heme b</name>
        <dbReference type="ChEBI" id="CHEBI:60344"/>
        <label>1</label>
    </ligand>
</feature>
<feature type="binding site" evidence="1">
    <location>
        <position position="224"/>
    </location>
    <ligand>
        <name>heme b</name>
        <dbReference type="ChEBI" id="CHEBI:60344"/>
        <label>2</label>
    </ligand>
</feature>
<feature type="glycosylation site" description="N-linked (GlcNAc...) asparagine" evidence="3">
    <location>
        <position position="38"/>
    </location>
</feature>
<feature type="splice variant" id="VSP_047358" description="In isoform 2." evidence="6">
    <original>M</original>
    <variation>MGKNFSDSFLSRECVIRM</variation>
    <location>
        <position position="1"/>
    </location>
</feature>
<feature type="sequence conflict" description="In Ref. 5; AAH04391." evidence="7" ref="5">
    <original>I</original>
    <variation>T</variation>
    <location>
        <position position="122"/>
    </location>
</feature>
<feature type="sequence conflict" description="In Ref. 1; BAG59601." evidence="7" ref="1">
    <original>I</original>
    <variation>N</variation>
    <location>
        <position position="168"/>
    </location>
</feature>
<name>CYAC3_HUMAN</name>
<comment type="function">
    <text evidence="2">Transmembrane reductase that uses ascorbate as an electron donor in the cytoplasm and transfers electrons across membranes to reduce iron cations Fe(3+) into Fe(2+) in the lumen of the late endosome and lysosome. Reduced iron can then be extruded from the late endosome and lysosome to the cytoplasm by divalent metal-specific transporters. It is therefore most probably involved in endosomal and lysosomal cellular iron homeostasis.</text>
</comment>
<comment type="catalytic activity">
    <reaction evidence="2">
        <text>Fe(3+)(out) + L-ascorbate(in) = monodehydro-L-ascorbate radical(in) + Fe(2+)(out) + H(+)</text>
        <dbReference type="Rhea" id="RHEA:30403"/>
        <dbReference type="ChEBI" id="CHEBI:15378"/>
        <dbReference type="ChEBI" id="CHEBI:29033"/>
        <dbReference type="ChEBI" id="CHEBI:29034"/>
        <dbReference type="ChEBI" id="CHEBI:38290"/>
        <dbReference type="ChEBI" id="CHEBI:59513"/>
        <dbReference type="EC" id="7.2.1.3"/>
    </reaction>
    <physiologicalReaction direction="left-to-right" evidence="2">
        <dbReference type="Rhea" id="RHEA:30404"/>
    </physiologicalReaction>
</comment>
<comment type="cofactor">
    <cofactor evidence="1">
        <name>heme b</name>
        <dbReference type="ChEBI" id="CHEBI:60344"/>
    </cofactor>
    <text evidence="1">Binds 2 heme b groups non-covalently.</text>
</comment>
<comment type="subunit">
    <text evidence="1">Homodimer.</text>
</comment>
<comment type="interaction">
    <interactant intactId="EBI-10269179">
        <id>Q8NBI2</id>
    </interactant>
    <interactant intactId="EBI-6916385">
        <id>Q9NUQ2</id>
        <label>AGPAT5</label>
    </interactant>
    <organismsDiffer>false</organismsDiffer>
    <experiments>3</experiments>
</comment>
<comment type="interaction">
    <interactant intactId="EBI-10269179">
        <id>Q8NBI2</id>
    </interactant>
    <interactant intactId="EBI-13059134">
        <id>Q13520</id>
        <label>AQP6</label>
    </interactant>
    <organismsDiffer>false</organismsDiffer>
    <experiments>3</experiments>
</comment>
<comment type="interaction">
    <interactant intactId="EBI-10269179">
        <id>Q8NBI2</id>
    </interactant>
    <interactant intactId="EBI-525714">
        <id>P25942</id>
        <label>CD40</label>
    </interactant>
    <organismsDiffer>false</organismsDiffer>
    <experiments>3</experiments>
</comment>
<comment type="interaction">
    <interactant intactId="EBI-10269179">
        <id>Q8NBI2</id>
    </interactant>
    <interactant intactId="EBI-7797864">
        <id>P11912</id>
        <label>CD79A</label>
    </interactant>
    <organismsDiffer>false</organismsDiffer>
    <experiments>3</experiments>
</comment>
<comment type="interaction">
    <interactant intactId="EBI-10269179">
        <id>Q8NBI2</id>
    </interactant>
    <interactant intactId="EBI-18400628">
        <id>O00501</id>
        <label>CLDN5</label>
    </interactant>
    <organismsDiffer>false</organismsDiffer>
    <experiments>3</experiments>
</comment>
<comment type="interaction">
    <interactant intactId="EBI-10269179">
        <id>Q8NBI2</id>
    </interactant>
    <interactant intactId="EBI-740744">
        <id>O95471</id>
        <label>CLDN7</label>
    </interactant>
    <organismsDiffer>false</organismsDiffer>
    <experiments>3</experiments>
</comment>
<comment type="interaction">
    <interactant intactId="EBI-10269179">
        <id>Q8NBI2</id>
    </interactant>
    <interactant intactId="EBI-852194">
        <id>Q68CJ9</id>
        <label>CREB3L3</label>
    </interactant>
    <organismsDiffer>false</organismsDiffer>
    <experiments>3</experiments>
</comment>
<comment type="interaction">
    <interactant intactId="EBI-10269179">
        <id>Q8NBI2</id>
    </interactant>
    <interactant intactId="EBI-2339219">
        <id>Q08426</id>
        <label>EHHADH</label>
    </interactant>
    <organismsDiffer>false</organismsDiffer>
    <experiments>3</experiments>
</comment>
<comment type="interaction">
    <interactant intactId="EBI-10269179">
        <id>Q8NBI2</id>
    </interactant>
    <interactant intactId="EBI-2833872">
        <id>O15552</id>
        <label>FFAR2</label>
    </interactant>
    <organismsDiffer>false</organismsDiffer>
    <experiments>3</experiments>
</comment>
<comment type="interaction">
    <interactant intactId="EBI-10269179">
        <id>Q8NBI2</id>
    </interactant>
    <interactant intactId="EBI-17935713">
        <id>Q96P66</id>
        <label>GPR101</label>
    </interactant>
    <organismsDiffer>false</organismsDiffer>
    <experiments>3</experiments>
</comment>
<comment type="interaction">
    <interactant intactId="EBI-10269179">
        <id>Q8NBI2</id>
    </interactant>
    <interactant intactId="EBI-13345167">
        <id>Q8TDT2</id>
        <label>GPR152</label>
    </interactant>
    <organismsDiffer>false</organismsDiffer>
    <experiments>3</experiments>
</comment>
<comment type="interaction">
    <interactant intactId="EBI-10269179">
        <id>Q8NBI2</id>
    </interactant>
    <interactant intactId="EBI-2927498">
        <id>O60883</id>
        <label>GPR37L1</label>
    </interactant>
    <organismsDiffer>false</organismsDiffer>
    <experiments>3</experiments>
</comment>
<comment type="interaction">
    <interactant intactId="EBI-10269179">
        <id>Q8NBI2</id>
    </interactant>
    <interactant intactId="EBI-11721746">
        <id>Q8TED1</id>
        <label>GPX8</label>
    </interactant>
    <organismsDiffer>false</organismsDiffer>
    <experiments>3</experiments>
</comment>
<comment type="interaction">
    <interactant intactId="EBI-10269179">
        <id>Q8NBI2</id>
    </interactant>
    <interactant intactId="EBI-2868124">
        <id>Q9BSE4</id>
        <label>HERPUD2</label>
    </interactant>
    <organismsDiffer>false</organismsDiffer>
    <experiments>3</experiments>
</comment>
<comment type="interaction">
    <interactant intactId="EBI-10269179">
        <id>Q8NBI2</id>
    </interactant>
    <interactant intactId="EBI-9018187">
        <id>P26715</id>
        <label>KLRC1</label>
    </interactant>
    <organismsDiffer>false</organismsDiffer>
    <experiments>3</experiments>
</comment>
<comment type="interaction">
    <interactant intactId="EBI-10269179">
        <id>Q8NBI2</id>
    </interactant>
    <interactant intactId="EBI-3267258">
        <id>Q86VI4</id>
        <label>LAPTM4B</label>
    </interactant>
    <organismsDiffer>false</organismsDiffer>
    <experiments>3</experiments>
</comment>
<comment type="interaction">
    <interactant intactId="EBI-10269179">
        <id>Q8NBI2</id>
    </interactant>
    <interactant intactId="EBI-3919694">
        <id>P15151</id>
        <label>PVR</label>
    </interactant>
    <organismsDiffer>false</organismsDiffer>
    <experiments>3</experiments>
</comment>
<comment type="interaction">
    <interactant intactId="EBI-10269179">
        <id>Q8NBI2</id>
    </interactant>
    <interactant intactId="EBI-2340249">
        <id>Q96GF1</id>
        <label>RNF185</label>
    </interactant>
    <organismsDiffer>false</organismsDiffer>
    <experiments>3</experiments>
</comment>
<comment type="interaction">
    <interactant intactId="EBI-10269179">
        <id>Q8NBI2</id>
    </interactant>
    <interactant intactId="EBI-348482">
        <id>Q99942</id>
        <label>RNF5</label>
    </interactant>
    <organismsDiffer>false</organismsDiffer>
    <experiments>6</experiments>
</comment>
<comment type="interaction">
    <interactant intactId="EBI-10269179">
        <id>Q8NBI2</id>
    </interactant>
    <interactant intactId="EBI-18037857">
        <id>Q3SXP7</id>
        <label>SHISAL1</label>
    </interactant>
    <organismsDiffer>false</organismsDiffer>
    <experiments>3</experiments>
</comment>
<comment type="interaction">
    <interactant intactId="EBI-10269179">
        <id>Q8NBI2</id>
    </interactant>
    <interactant intactId="EBI-13351685">
        <id>Q96CE8</id>
        <label>TM4SF18</label>
    </interactant>
    <organismsDiffer>false</organismsDiffer>
    <experiments>3</experiments>
</comment>
<comment type="subcellular location">
    <subcellularLocation>
        <location evidence="2">Late endosome membrane</location>
        <topology evidence="1">Multi-pass membrane protein</topology>
    </subcellularLocation>
    <subcellularLocation>
        <location evidence="5">Lysosome membrane</location>
        <topology evidence="1">Multi-pass membrane protein</topology>
    </subcellularLocation>
</comment>
<comment type="alternative products">
    <event type="alternative splicing"/>
    <isoform>
        <id>Q8NBI2-1</id>
        <name>1</name>
        <sequence type="displayed"/>
    </isoform>
    <isoform>
        <id>Q8NBI2-2</id>
        <name>2</name>
        <sequence type="described" ref="VSP_047358"/>
    </isoform>
</comment>
<comment type="PTM">
    <text evidence="2">N-glycosylated.</text>
</comment>
<dbReference type="EC" id="7.2.1.3" evidence="2"/>
<dbReference type="EMBL" id="AK056751">
    <property type="protein sequence ID" value="BAG51804.1"/>
    <property type="molecule type" value="mRNA"/>
</dbReference>
<dbReference type="EMBL" id="AK075559">
    <property type="protein sequence ID" value="BAC11698.1"/>
    <property type="molecule type" value="mRNA"/>
</dbReference>
<dbReference type="EMBL" id="AK297084">
    <property type="protein sequence ID" value="BAG59601.1"/>
    <property type="molecule type" value="mRNA"/>
</dbReference>
<dbReference type="EMBL" id="AP003108">
    <property type="status" value="NOT_ANNOTATED_CDS"/>
    <property type="molecule type" value="Genomic_DNA"/>
</dbReference>
<dbReference type="EMBL" id="CH471076">
    <property type="protein sequence ID" value="EAW73941.1"/>
    <property type="molecule type" value="Genomic_DNA"/>
</dbReference>
<dbReference type="EMBL" id="CH471076">
    <property type="protein sequence ID" value="EAW73942.1"/>
    <property type="molecule type" value="Genomic_DNA"/>
</dbReference>
<dbReference type="EMBL" id="BC004391">
    <property type="protein sequence ID" value="AAH04391.1"/>
    <property type="molecule type" value="mRNA"/>
</dbReference>
<dbReference type="EMBL" id="BC014045">
    <property type="protein sequence ID" value="AAH14045.2"/>
    <property type="molecule type" value="mRNA"/>
</dbReference>
<dbReference type="EMBL" id="BC047710">
    <property type="protein sequence ID" value="AAH47710.1"/>
    <property type="molecule type" value="mRNA"/>
</dbReference>
<dbReference type="CCDS" id="CCDS53639.1">
    <molecule id="Q8NBI2-2"/>
</dbReference>
<dbReference type="CCDS" id="CCDS8004.1">
    <molecule id="Q8NBI2-1"/>
</dbReference>
<dbReference type="RefSeq" id="NP_001154924.1">
    <molecule id="Q8NBI2-1"/>
    <property type="nucleotide sequence ID" value="NM_001161452.2"/>
</dbReference>
<dbReference type="RefSeq" id="NP_001154926.1">
    <molecule id="Q8NBI2-2"/>
    <property type="nucleotide sequence ID" value="NM_001161454.1"/>
</dbReference>
<dbReference type="RefSeq" id="NP_001287692.1">
    <property type="nucleotide sequence ID" value="NM_001300763.1"/>
</dbReference>
<dbReference type="RefSeq" id="NP_705839.3">
    <molecule id="Q8NBI2-1"/>
    <property type="nucleotide sequence ID" value="NM_153611.4"/>
</dbReference>
<dbReference type="SMR" id="Q8NBI2"/>
<dbReference type="BioGRID" id="128617">
    <property type="interactions" value="24"/>
</dbReference>
<dbReference type="FunCoup" id="Q8NBI2">
    <property type="interactions" value="479"/>
</dbReference>
<dbReference type="IntAct" id="Q8NBI2">
    <property type="interactions" value="21"/>
</dbReference>
<dbReference type="STRING" id="9606.ENSP00000389745"/>
<dbReference type="GlyCosmos" id="Q8NBI2">
    <property type="glycosylation" value="1 site, No reported glycans"/>
</dbReference>
<dbReference type="GlyGen" id="Q8NBI2">
    <property type="glycosylation" value="1 site"/>
</dbReference>
<dbReference type="BioMuta" id="CYB561A3"/>
<dbReference type="DMDM" id="74730147"/>
<dbReference type="jPOST" id="Q8NBI2"/>
<dbReference type="MassIVE" id="Q8NBI2"/>
<dbReference type="PaxDb" id="9606-ENSP00000389745"/>
<dbReference type="PeptideAtlas" id="Q8NBI2"/>
<dbReference type="ProteomicsDB" id="72770">
    <molecule id="Q8NBI2-1"/>
</dbReference>
<dbReference type="Antibodypedia" id="52925">
    <property type="antibodies" value="9 antibodies from 6 providers"/>
</dbReference>
<dbReference type="DNASU" id="220002"/>
<dbReference type="Ensembl" id="ENST00000294072.9">
    <molecule id="Q8NBI2-1"/>
    <property type="protein sequence ID" value="ENSP00000294072.4"/>
    <property type="gene ID" value="ENSG00000162144.10"/>
</dbReference>
<dbReference type="Ensembl" id="ENST00000426130.6">
    <molecule id="Q8NBI2-2"/>
    <property type="protein sequence ID" value="ENSP00000398979.2"/>
    <property type="gene ID" value="ENSG00000162144.10"/>
</dbReference>
<dbReference type="Ensembl" id="ENST00000536915.5">
    <molecule id="Q8NBI2-1"/>
    <property type="protein sequence ID" value="ENSP00000437390.1"/>
    <property type="gene ID" value="ENSG00000162144.10"/>
</dbReference>
<dbReference type="GeneID" id="220002"/>
<dbReference type="KEGG" id="hsa:220002"/>
<dbReference type="MANE-Select" id="ENST00000294072.9">
    <property type="protein sequence ID" value="ENSP00000294072.4"/>
    <property type="RefSeq nucleotide sequence ID" value="NM_153611.6"/>
    <property type="RefSeq protein sequence ID" value="NP_705839.3"/>
</dbReference>
<dbReference type="UCSC" id="uc001nrg.4">
    <molecule id="Q8NBI2-1"/>
    <property type="organism name" value="human"/>
</dbReference>
<dbReference type="AGR" id="HGNC:23014"/>
<dbReference type="CTD" id="220002"/>
<dbReference type="DisGeNET" id="220002"/>
<dbReference type="GeneCards" id="CYB561A3"/>
<dbReference type="HGNC" id="HGNC:23014">
    <property type="gene designation" value="CYB561A3"/>
</dbReference>
<dbReference type="HPA" id="ENSG00000162144">
    <property type="expression patterns" value="Tissue enhanced (adrenal)"/>
</dbReference>
<dbReference type="MIM" id="618757">
    <property type="type" value="gene"/>
</dbReference>
<dbReference type="neXtProt" id="NX_Q8NBI2"/>
<dbReference type="OpenTargets" id="ENSG00000162144"/>
<dbReference type="PharmGKB" id="PA134880796"/>
<dbReference type="VEuPathDB" id="HostDB:ENSG00000162144"/>
<dbReference type="eggNOG" id="KOG1619">
    <property type="taxonomic scope" value="Eukaryota"/>
</dbReference>
<dbReference type="GeneTree" id="ENSGT00950000183197"/>
<dbReference type="InParanoid" id="Q8NBI2"/>
<dbReference type="OMA" id="LSTIYWM"/>
<dbReference type="OrthoDB" id="907479at2759"/>
<dbReference type="PAN-GO" id="Q8NBI2">
    <property type="GO annotations" value="2 GO annotations based on evolutionary models"/>
</dbReference>
<dbReference type="PhylomeDB" id="Q8NBI2"/>
<dbReference type="TreeFam" id="TF314222"/>
<dbReference type="PathwayCommons" id="Q8NBI2"/>
<dbReference type="SignaLink" id="Q8NBI2"/>
<dbReference type="BioGRID-ORCS" id="220002">
    <property type="hits" value="23 hits in 1157 CRISPR screens"/>
</dbReference>
<dbReference type="ChiTaRS" id="CYB561A3">
    <property type="organism name" value="human"/>
</dbReference>
<dbReference type="GenomeRNAi" id="220002"/>
<dbReference type="Pharos" id="Q8NBI2">
    <property type="development level" value="Tdark"/>
</dbReference>
<dbReference type="PRO" id="PR:Q8NBI2"/>
<dbReference type="Proteomes" id="UP000005640">
    <property type="component" value="Chromosome 11"/>
</dbReference>
<dbReference type="RNAct" id="Q8NBI2">
    <property type="molecule type" value="protein"/>
</dbReference>
<dbReference type="Bgee" id="ENSG00000162144">
    <property type="expression patterns" value="Expressed in right adrenal gland and 176 other cell types or tissues"/>
</dbReference>
<dbReference type="ExpressionAtlas" id="Q8NBI2">
    <property type="expression patterns" value="baseline and differential"/>
</dbReference>
<dbReference type="GO" id="GO:0043231">
    <property type="term" value="C:intracellular membrane-bounded organelle"/>
    <property type="evidence" value="ECO:0000314"/>
    <property type="project" value="HPA"/>
</dbReference>
<dbReference type="GO" id="GO:0031902">
    <property type="term" value="C:late endosome membrane"/>
    <property type="evidence" value="ECO:0000250"/>
    <property type="project" value="UniProtKB"/>
</dbReference>
<dbReference type="GO" id="GO:0005765">
    <property type="term" value="C:lysosomal membrane"/>
    <property type="evidence" value="ECO:0007005"/>
    <property type="project" value="UniProtKB"/>
</dbReference>
<dbReference type="GO" id="GO:0005730">
    <property type="term" value="C:nucleolus"/>
    <property type="evidence" value="ECO:0000314"/>
    <property type="project" value="HPA"/>
</dbReference>
<dbReference type="GO" id="GO:0046872">
    <property type="term" value="F:metal ion binding"/>
    <property type="evidence" value="ECO:0007669"/>
    <property type="project" value="UniProtKB-KW"/>
</dbReference>
<dbReference type="GO" id="GO:0016491">
    <property type="term" value="F:oxidoreductase activity"/>
    <property type="evidence" value="ECO:0000318"/>
    <property type="project" value="GO_Central"/>
</dbReference>
<dbReference type="GO" id="GO:0140571">
    <property type="term" value="F:transmembrane ascorbate ferrireductase activity"/>
    <property type="evidence" value="ECO:0000250"/>
    <property type="project" value="UniProtKB"/>
</dbReference>
<dbReference type="GO" id="GO:0006879">
    <property type="term" value="P:intracellular iron ion homeostasis"/>
    <property type="evidence" value="ECO:0000250"/>
    <property type="project" value="UniProtKB"/>
</dbReference>
<dbReference type="CDD" id="cd08762">
    <property type="entry name" value="Cyt_b561_CYBASC3"/>
    <property type="match status" value="1"/>
</dbReference>
<dbReference type="FunFam" id="1.20.120.1770:FF:000001">
    <property type="entry name" value="Cytochrome b reductase 1"/>
    <property type="match status" value="1"/>
</dbReference>
<dbReference type="Gene3D" id="1.20.120.1770">
    <property type="match status" value="1"/>
</dbReference>
<dbReference type="InterPro" id="IPR043205">
    <property type="entry name" value="CYB561/CYBRD1-like"/>
</dbReference>
<dbReference type="InterPro" id="IPR006593">
    <property type="entry name" value="Cyt_b561/ferric_Rdtase_TM"/>
</dbReference>
<dbReference type="PANTHER" id="PTHR10106">
    <property type="entry name" value="CYTOCHROME B561-RELATED"/>
    <property type="match status" value="1"/>
</dbReference>
<dbReference type="PANTHER" id="PTHR10106:SF38">
    <property type="entry name" value="LYSOSOMAL MEMBRANE ASCORBATE-DEPENDENT FERRIREDUCTASE CYB561A3"/>
    <property type="match status" value="1"/>
</dbReference>
<dbReference type="Pfam" id="PF03188">
    <property type="entry name" value="Cytochrom_B561"/>
    <property type="match status" value="1"/>
</dbReference>
<dbReference type="SMART" id="SM00665">
    <property type="entry name" value="B561"/>
    <property type="match status" value="1"/>
</dbReference>
<dbReference type="PROSITE" id="PS50939">
    <property type="entry name" value="CYTOCHROME_B561"/>
    <property type="match status" value="1"/>
</dbReference>
<sequence length="242" mass="27214">MVSGRFYLSCLLLGSLGSMCILFTIYWMQYWRGGFAWNGSIYMFNWHPVLMVAGMVVFYGGASLVYRLPQSWVGPKLPWKLLHAALHLMAFVLTVVGLVAVFTFHNHGRTANLYSLHSWLGITTVFLFACQWFLGFAVFLLPWASMWLRSLLKPIHVFFGAAILSLSIASVISGINEKLFFSLKNTTRPYHSLPSEAVFANSTGMLVVAFGLLVLYILLASSWKRPEPGILTDRQPLLHDGE</sequence>
<organism>
    <name type="scientific">Homo sapiens</name>
    <name type="common">Human</name>
    <dbReference type="NCBI Taxonomy" id="9606"/>
    <lineage>
        <taxon>Eukaryota</taxon>
        <taxon>Metazoa</taxon>
        <taxon>Chordata</taxon>
        <taxon>Craniata</taxon>
        <taxon>Vertebrata</taxon>
        <taxon>Euteleostomi</taxon>
        <taxon>Mammalia</taxon>
        <taxon>Eutheria</taxon>
        <taxon>Euarchontoglires</taxon>
        <taxon>Primates</taxon>
        <taxon>Haplorrhini</taxon>
        <taxon>Catarrhini</taxon>
        <taxon>Hominidae</taxon>
        <taxon>Homo</taxon>
    </lineage>
</organism>